<comment type="subcellular location">
    <subcellularLocation>
        <location evidence="1">Cell membrane</location>
        <topology evidence="1">Multi-pass membrane protein</topology>
    </subcellularLocation>
</comment>
<comment type="similarity">
    <text evidence="1">Belongs to the UPF0316 family.</text>
</comment>
<keyword id="KW-1003">Cell membrane</keyword>
<keyword id="KW-0472">Membrane</keyword>
<keyword id="KW-0812">Transmembrane</keyword>
<keyword id="KW-1133">Transmembrane helix</keyword>
<feature type="chain" id="PRO_1000198421" description="UPF0316 protein CLD_0163">
    <location>
        <begin position="1"/>
        <end position="170"/>
    </location>
</feature>
<feature type="transmembrane region" description="Helical" evidence="1">
    <location>
        <begin position="1"/>
        <end position="21"/>
    </location>
</feature>
<feature type="transmembrane region" description="Helical" evidence="1">
    <location>
        <begin position="36"/>
        <end position="56"/>
    </location>
</feature>
<sequence>MLSYYAFIFFAKIMEVALMTIRTVLITRGEKLYGSIIGFIEVTIWLYVTSSVLSGIKDDPIRMVVYALGFTCGNYMGCVIEEKLAIGLLTINVITSESDGKRLAEILRDENVGVTMVDAEGKIEQKKMLIIHAKRKRREEIIRTIEGSDINAMISVNDIKTVYGGYGIRK</sequence>
<name>Y163_CLOBK</name>
<accession>B1IDK9</accession>
<protein>
    <recommendedName>
        <fullName evidence="1">UPF0316 protein CLD_0163</fullName>
    </recommendedName>
</protein>
<evidence type="ECO:0000255" key="1">
    <source>
        <dbReference type="HAMAP-Rule" id="MF_01515"/>
    </source>
</evidence>
<reference key="1">
    <citation type="journal article" date="2007" name="PLoS ONE">
        <title>Analysis of the neurotoxin complex genes in Clostridium botulinum A1-A4 and B1 strains: BoNT/A3, /Ba4 and /B1 clusters are located within plasmids.</title>
        <authorList>
            <person name="Smith T.J."/>
            <person name="Hill K.K."/>
            <person name="Foley B.T."/>
            <person name="Detter J.C."/>
            <person name="Munk A.C."/>
            <person name="Bruce D.C."/>
            <person name="Doggett N.A."/>
            <person name="Smith L.A."/>
            <person name="Marks J.D."/>
            <person name="Xie G."/>
            <person name="Brettin T.S."/>
        </authorList>
    </citation>
    <scope>NUCLEOTIDE SEQUENCE [LARGE SCALE GENOMIC DNA]</scope>
    <source>
        <strain>Okra / Type B1</strain>
    </source>
</reference>
<organism>
    <name type="scientific">Clostridium botulinum (strain Okra / Type B1)</name>
    <dbReference type="NCBI Taxonomy" id="498213"/>
    <lineage>
        <taxon>Bacteria</taxon>
        <taxon>Bacillati</taxon>
        <taxon>Bacillota</taxon>
        <taxon>Clostridia</taxon>
        <taxon>Eubacteriales</taxon>
        <taxon>Clostridiaceae</taxon>
        <taxon>Clostridium</taxon>
    </lineage>
</organism>
<proteinExistence type="inferred from homology"/>
<gene>
    <name type="ordered locus">CLD_0163</name>
</gene>
<dbReference type="EMBL" id="CP000939">
    <property type="protein sequence ID" value="ACA44580.1"/>
    <property type="molecule type" value="Genomic_DNA"/>
</dbReference>
<dbReference type="RefSeq" id="WP_003357138.1">
    <property type="nucleotide sequence ID" value="NC_010516.1"/>
</dbReference>
<dbReference type="SMR" id="B1IDK9"/>
<dbReference type="KEGG" id="cbb:CLD_0163"/>
<dbReference type="HOGENOM" id="CLU_106166_0_0_9"/>
<dbReference type="Proteomes" id="UP000008541">
    <property type="component" value="Chromosome"/>
</dbReference>
<dbReference type="GO" id="GO:0005886">
    <property type="term" value="C:plasma membrane"/>
    <property type="evidence" value="ECO:0007669"/>
    <property type="project" value="UniProtKB-SubCell"/>
</dbReference>
<dbReference type="CDD" id="cd16381">
    <property type="entry name" value="YitT_C_like_1"/>
    <property type="match status" value="1"/>
</dbReference>
<dbReference type="HAMAP" id="MF_01515">
    <property type="entry name" value="UPF0316"/>
    <property type="match status" value="1"/>
</dbReference>
<dbReference type="InterPro" id="IPR019264">
    <property type="entry name" value="DUF2179"/>
</dbReference>
<dbReference type="InterPro" id="IPR044035">
    <property type="entry name" value="DUF5698"/>
</dbReference>
<dbReference type="InterPro" id="IPR022930">
    <property type="entry name" value="UPF0316"/>
</dbReference>
<dbReference type="PANTHER" id="PTHR40060">
    <property type="entry name" value="UPF0316 PROTEIN YEBE"/>
    <property type="match status" value="1"/>
</dbReference>
<dbReference type="PANTHER" id="PTHR40060:SF1">
    <property type="entry name" value="UPF0316 PROTEIN YEBE"/>
    <property type="match status" value="1"/>
</dbReference>
<dbReference type="Pfam" id="PF10035">
    <property type="entry name" value="DUF2179"/>
    <property type="match status" value="1"/>
</dbReference>
<dbReference type="Pfam" id="PF18955">
    <property type="entry name" value="DUF5698"/>
    <property type="match status" value="1"/>
</dbReference>